<accession>O59905</accession>
<reference key="1">
    <citation type="journal article" date="1998" name="Mol. Cell">
        <title>SOR1, a gene required for photosensitizer and singlet oxygen resistance in Cercospora fungi, is highly conserved in divergent organisms.</title>
        <authorList>
            <person name="Ehrenshaft M."/>
            <person name="Jenns A.E."/>
            <person name="Chung K.-R."/>
            <person name="Daub M.E."/>
        </authorList>
    </citation>
    <scope>NUCLEOTIDE SEQUENCE [GENOMIC DNA]</scope>
    <scope>FUNCTION</scope>
    <scope>DEVELOPMENTAL STAGE</scope>
    <source>
        <strain>ATCC 18366</strain>
    </source>
</reference>
<reference key="2">
    <citation type="journal article" date="1999" name="Curr. Genet.">
        <title>Functional characterization of SOR1, a gene required for resistance to photosensitizing toxins in the fungus Cercospora nicotianae.</title>
        <authorList>
            <person name="Ehrenshaft M."/>
            <person name="Chung K.-R."/>
            <person name="Jenns A.E."/>
            <person name="Daub M.E."/>
        </authorList>
    </citation>
    <scope>FUNCTION</scope>
    <scope>INDUCTION</scope>
    <scope>MUTAGENESIS OF 133-ILE-GLY-134; CYS-176 AND SER-189</scope>
    <scope>DISRUPTION PHENOTYPE</scope>
</reference>
<reference key="3">
    <citation type="journal article" date="1999" name="Proc. Natl. Acad. Sci. U.S.A.">
        <title>A highly conserved sequence is a novel gene involved in de novo vitamin B6 biosynthesis.</title>
        <authorList>
            <person name="Ehrenshaft M."/>
            <person name="Bilski P."/>
            <person name="Li M.Y."/>
            <person name="Chignell C.F."/>
            <person name="Daub M.E."/>
        </authorList>
    </citation>
    <scope>FUNCTION</scope>
</reference>
<proteinExistence type="evidence at protein level"/>
<name>PDX1_CERNC</name>
<sequence length="343" mass="36181">MASNGTSVSPFRSQKNAAMAVNDTPANGHAEPSTITAASKTNTTKITSQNDPQSSFAVKVGLAQMLKGGVIMDVVNAEQARIAEEAGACAVMALERVPADIRKDGGVARMSDPQMIKDIMNAVTIPVMAKSRIGHFVECQILQAIGVDYIDESEVLTPADPVNHIDKSVYNVPFVCGCKNLGEALRRISEGAAMIRTKGEAGTGDVVEAVRHMQTVNAEIAKASSASDADLRMMARELQCDYNLLKQTAQLKRLPVVNFAAGGIATPADAALMMQMGCDGVFVGSGIFKSGDAAKRAKAIVQATTHYNDPKVLAEVSSGLGEAMVGINCDKLPETQKLATRGW</sequence>
<evidence type="ECO:0000250" key="1">
    <source>
        <dbReference type="UniProtKB" id="O59080"/>
    </source>
</evidence>
<evidence type="ECO:0000250" key="2">
    <source>
        <dbReference type="UniProtKB" id="Q03148"/>
    </source>
</evidence>
<evidence type="ECO:0000269" key="3">
    <source>
    </source>
</evidence>
<evidence type="ECO:0000269" key="4">
    <source>
    </source>
</evidence>
<evidence type="ECO:0000269" key="5">
    <source>
    </source>
</evidence>
<evidence type="ECO:0000305" key="6"/>
<keyword id="KW-0456">Lyase</keyword>
<keyword id="KW-0663">Pyridoxal phosphate</keyword>
<keyword id="KW-0704">Schiff base</keyword>
<comment type="function">
    <text evidence="3 4 5">Catalyzes the formation of pyridoxal 5'-phosphate from ribose 5-phosphate (RBP), glyceraldehyde 3-phosphate (G3P) and ammonia. The ammonia is provided by PDX2. Can also use ribulose 5-phosphate and dihydroxyacetone phosphate as substrates, resulting from enzyme-catalyzed isomerization of RBP and G3P, respectively. Also plays an indirect role in resistance to singlet oxygen-generating photosensitizers.</text>
</comment>
<comment type="catalytic activity">
    <reaction evidence="2">
        <text>aldehydo-D-ribose 5-phosphate + D-glyceraldehyde 3-phosphate + L-glutamine = pyridoxal 5'-phosphate + L-glutamate + phosphate + 3 H2O + H(+)</text>
        <dbReference type="Rhea" id="RHEA:31507"/>
        <dbReference type="ChEBI" id="CHEBI:15377"/>
        <dbReference type="ChEBI" id="CHEBI:15378"/>
        <dbReference type="ChEBI" id="CHEBI:29985"/>
        <dbReference type="ChEBI" id="CHEBI:43474"/>
        <dbReference type="ChEBI" id="CHEBI:58273"/>
        <dbReference type="ChEBI" id="CHEBI:58359"/>
        <dbReference type="ChEBI" id="CHEBI:59776"/>
        <dbReference type="ChEBI" id="CHEBI:597326"/>
        <dbReference type="EC" id="4.3.3.6"/>
    </reaction>
</comment>
<comment type="pathway">
    <text>Cofactor biosynthesis; pyridoxal 5'-phosphate biosynthesis.</text>
</comment>
<comment type="developmental stage">
    <text evidence="4">Expressed throughout the growth cycle.</text>
</comment>
<comment type="induction">
    <text evidence="5">Accumulation is enhanced two-fold by light, but is unaffected by the presence of cercosporin, a photosensitizer synthesized by C.nicotianae.</text>
</comment>
<comment type="disruption phenotype">
    <text evidence="5">Defects cause some indirect sensitivity to photosensitizers, due to the inability to synthesize pyridoxal 5'-phosphate. Indeed, pyridoxal 5'-phosphate quenches singlet oxygen at a rate comparable to that of vitamins C and E.</text>
</comment>
<comment type="similarity">
    <text evidence="6">Belongs to the PdxS/SNZ family.</text>
</comment>
<protein>
    <recommendedName>
        <fullName>Pyridoxal 5'-phosphate synthase subunit PDX1</fullName>
        <shortName>PLP synthase subunit PDX1</shortName>
        <ecNumber>4.3.3.6</ecNumber>
    </recommendedName>
    <alternativeName>
        <fullName>Singlet oxygen resistance protein 1</fullName>
    </alternativeName>
</protein>
<organism>
    <name type="scientific">Cercospora nicotianae</name>
    <name type="common">Barn spot disease fungus</name>
    <dbReference type="NCBI Taxonomy" id="29003"/>
    <lineage>
        <taxon>Eukaryota</taxon>
        <taxon>Fungi</taxon>
        <taxon>Dikarya</taxon>
        <taxon>Ascomycota</taxon>
        <taxon>Pezizomycotina</taxon>
        <taxon>Dothideomycetes</taxon>
        <taxon>Dothideomycetidae</taxon>
        <taxon>Mycosphaerellales</taxon>
        <taxon>Mycosphaerellaceae</taxon>
        <taxon>Cercospora</taxon>
    </lineage>
</organism>
<feature type="chain" id="PRO_0000109361" description="Pyridoxal 5'-phosphate synthase subunit PDX1">
    <location>
        <begin position="1"/>
        <end position="343"/>
    </location>
</feature>
<feature type="active site" description="Schiff-base intermediate with D-ribose 5-phosphate" evidence="1">
    <location>
        <position position="130"/>
    </location>
</feature>
<feature type="binding site" evidence="1">
    <location>
        <position position="73"/>
    </location>
    <ligand>
        <name>D-ribose 5-phosphate</name>
        <dbReference type="ChEBI" id="CHEBI:78346"/>
    </ligand>
</feature>
<feature type="binding site" evidence="1">
    <location>
        <position position="202"/>
    </location>
    <ligand>
        <name>D-ribose 5-phosphate</name>
        <dbReference type="ChEBI" id="CHEBI:78346"/>
    </ligand>
</feature>
<feature type="binding site" evidence="2">
    <location>
        <position position="214"/>
    </location>
    <ligand>
        <name>D-glyceraldehyde 3-phosphate</name>
        <dbReference type="ChEBI" id="CHEBI:59776"/>
    </ligand>
</feature>
<feature type="binding site" evidence="1">
    <location>
        <position position="263"/>
    </location>
    <ligand>
        <name>D-ribose 5-phosphate</name>
        <dbReference type="ChEBI" id="CHEBI:78346"/>
    </ligand>
</feature>
<feature type="binding site" evidence="1">
    <location>
        <begin position="284"/>
        <end position="285"/>
    </location>
    <ligand>
        <name>D-ribose 5-phosphate</name>
        <dbReference type="ChEBI" id="CHEBI:78346"/>
    </ligand>
</feature>
<feature type="mutagenesis site" description="In CS6; induces sensitivity to singlet oxygen." evidence="5">
    <original>IG</original>
    <variation>NC</variation>
    <location>
        <begin position="133"/>
        <end position="134"/>
    </location>
</feature>
<feature type="mutagenesis site" description="In CS9; induces sensitivity to singlet oxygen." evidence="5">
    <original>C</original>
    <variation>R</variation>
    <location>
        <position position="176"/>
    </location>
</feature>
<feature type="mutagenesis site" description="In CS8; induces sensitivity to singlet oxygen." evidence="5">
    <original>S</original>
    <variation>P</variation>
    <location>
        <position position="189"/>
    </location>
</feature>
<dbReference type="EC" id="4.3.3.6"/>
<dbReference type="EMBL" id="AF035619">
    <property type="protein sequence ID" value="AAD13386.1"/>
    <property type="molecule type" value="Genomic_DNA"/>
</dbReference>
<dbReference type="PIR" id="T46646">
    <property type="entry name" value="T46646"/>
</dbReference>
<dbReference type="SMR" id="O59905"/>
<dbReference type="UniPathway" id="UPA00245"/>
<dbReference type="GO" id="GO:0036381">
    <property type="term" value="F:pyridoxal 5'-phosphate synthase (glutamine hydrolysing) activity"/>
    <property type="evidence" value="ECO:0007669"/>
    <property type="project" value="UniProtKB-EC"/>
</dbReference>
<dbReference type="GO" id="GO:0006520">
    <property type="term" value="P:amino acid metabolic process"/>
    <property type="evidence" value="ECO:0007669"/>
    <property type="project" value="TreeGrafter"/>
</dbReference>
<dbReference type="GO" id="GO:0042823">
    <property type="term" value="P:pyridoxal phosphate biosynthetic process"/>
    <property type="evidence" value="ECO:0007669"/>
    <property type="project" value="UniProtKB-UniPathway"/>
</dbReference>
<dbReference type="GO" id="GO:0008615">
    <property type="term" value="P:pyridoxine biosynthetic process"/>
    <property type="evidence" value="ECO:0007669"/>
    <property type="project" value="TreeGrafter"/>
</dbReference>
<dbReference type="CDD" id="cd04727">
    <property type="entry name" value="pdxS"/>
    <property type="match status" value="1"/>
</dbReference>
<dbReference type="FunFam" id="3.20.20.70:FF:000001">
    <property type="entry name" value="Pyridoxine biosynthesis protein PDX1"/>
    <property type="match status" value="1"/>
</dbReference>
<dbReference type="Gene3D" id="3.20.20.70">
    <property type="entry name" value="Aldolase class I"/>
    <property type="match status" value="1"/>
</dbReference>
<dbReference type="HAMAP" id="MF_01824">
    <property type="entry name" value="PdxS"/>
    <property type="match status" value="1"/>
</dbReference>
<dbReference type="InterPro" id="IPR013785">
    <property type="entry name" value="Aldolase_TIM"/>
</dbReference>
<dbReference type="InterPro" id="IPR001852">
    <property type="entry name" value="PdxS/SNZ"/>
</dbReference>
<dbReference type="InterPro" id="IPR033755">
    <property type="entry name" value="PdxS/SNZ_N"/>
</dbReference>
<dbReference type="InterPro" id="IPR011060">
    <property type="entry name" value="RibuloseP-bd_barrel"/>
</dbReference>
<dbReference type="NCBIfam" id="NF003215">
    <property type="entry name" value="PRK04180.1"/>
    <property type="match status" value="1"/>
</dbReference>
<dbReference type="NCBIfam" id="TIGR00343">
    <property type="entry name" value="pyridoxal 5'-phosphate synthase lyase subunit PdxS"/>
    <property type="match status" value="1"/>
</dbReference>
<dbReference type="PANTHER" id="PTHR31829">
    <property type="entry name" value="PYRIDOXAL 5'-PHOSPHATE SYNTHASE SUBUNIT SNZ1-RELATED"/>
    <property type="match status" value="1"/>
</dbReference>
<dbReference type="PANTHER" id="PTHR31829:SF0">
    <property type="entry name" value="PYRIDOXAL 5'-PHOSPHATE SYNTHASE SUBUNIT SNZ1-RELATED"/>
    <property type="match status" value="1"/>
</dbReference>
<dbReference type="Pfam" id="PF01680">
    <property type="entry name" value="SOR_SNZ"/>
    <property type="match status" value="1"/>
</dbReference>
<dbReference type="PIRSF" id="PIRSF029271">
    <property type="entry name" value="Pdx1"/>
    <property type="match status" value="1"/>
</dbReference>
<dbReference type="SUPFAM" id="SSF51366">
    <property type="entry name" value="Ribulose-phoshate binding barrel"/>
    <property type="match status" value="1"/>
</dbReference>
<dbReference type="PROSITE" id="PS01235">
    <property type="entry name" value="PDXS_SNZ_1"/>
    <property type="match status" value="1"/>
</dbReference>
<dbReference type="PROSITE" id="PS51129">
    <property type="entry name" value="PDXS_SNZ_2"/>
    <property type="match status" value="1"/>
</dbReference>
<gene>
    <name type="primary">PDX1</name>
    <name type="synonym">SOR1</name>
</gene>